<gene>
    <name type="primary">CXCR4</name>
</gene>
<name>CXCR4_CALJA</name>
<feature type="chain" id="PRO_0000247980" description="C-X-C chemokine receptor type 4">
    <location>
        <begin position="1"/>
        <end position="352"/>
    </location>
</feature>
<feature type="topological domain" description="Extracellular" evidence="6">
    <location>
        <begin position="1"/>
        <end position="38"/>
    </location>
</feature>
<feature type="transmembrane region" description="Helical; Name=1" evidence="2">
    <location>
        <begin position="39"/>
        <end position="63"/>
    </location>
</feature>
<feature type="topological domain" description="Cytoplasmic" evidence="6">
    <location>
        <begin position="64"/>
        <end position="77"/>
    </location>
</feature>
<feature type="transmembrane region" description="Helical; Name=2" evidence="2">
    <location>
        <begin position="78"/>
        <end position="99"/>
    </location>
</feature>
<feature type="topological domain" description="Extracellular" evidence="6">
    <location>
        <begin position="100"/>
        <end position="110"/>
    </location>
</feature>
<feature type="transmembrane region" description="Helical; Name=3" evidence="2">
    <location>
        <begin position="111"/>
        <end position="130"/>
    </location>
</feature>
<feature type="topological domain" description="Cytoplasmic" evidence="6">
    <location>
        <begin position="131"/>
        <end position="154"/>
    </location>
</feature>
<feature type="transmembrane region" description="Helical; Name=4" evidence="2">
    <location>
        <begin position="155"/>
        <end position="174"/>
    </location>
</feature>
<feature type="topological domain" description="Extracellular" evidence="6">
    <location>
        <begin position="175"/>
        <end position="195"/>
    </location>
</feature>
<feature type="transmembrane region" description="Helical; Name=5" evidence="2">
    <location>
        <begin position="196"/>
        <end position="216"/>
    </location>
</feature>
<feature type="topological domain" description="Cytoplasmic" evidence="6">
    <location>
        <begin position="217"/>
        <end position="241"/>
    </location>
</feature>
<feature type="transmembrane region" description="Helical; Name=6" evidence="2">
    <location>
        <begin position="242"/>
        <end position="261"/>
    </location>
</feature>
<feature type="topological domain" description="Extracellular" evidence="6">
    <location>
        <begin position="262"/>
        <end position="282"/>
    </location>
</feature>
<feature type="transmembrane region" description="Helical; Name=7" evidence="2">
    <location>
        <begin position="283"/>
        <end position="302"/>
    </location>
</feature>
<feature type="topological domain" description="Cytoplasmic" evidence="6">
    <location>
        <begin position="303"/>
        <end position="352"/>
    </location>
</feature>
<feature type="region of interest" description="Important for chemokine binding and signaling" evidence="1">
    <location>
        <begin position="1"/>
        <end position="21"/>
    </location>
</feature>
<feature type="region of interest" description="Chemokine binding" evidence="1">
    <location>
        <begin position="94"/>
        <end position="97"/>
    </location>
</feature>
<feature type="region of interest" description="Chemokine binding" evidence="1">
    <location>
        <begin position="113"/>
        <end position="117"/>
    </location>
</feature>
<feature type="region of interest" description="Involved in dimerization; when bound to chemokine" evidence="1">
    <location>
        <begin position="135"/>
        <end position="147"/>
    </location>
</feature>
<feature type="region of interest" description="Chemokine binding, important for signaling" evidence="1">
    <location>
        <begin position="186"/>
        <end position="190"/>
    </location>
</feature>
<feature type="region of interest" description="Involved in dimerization" evidence="1">
    <location>
        <begin position="191"/>
        <end position="210"/>
    </location>
</feature>
<feature type="region of interest" description="Involved in dimerization" evidence="1">
    <location>
        <begin position="266"/>
        <end position="268"/>
    </location>
</feature>
<feature type="region of interest" description="Disordered" evidence="5">
    <location>
        <begin position="329"/>
        <end position="352"/>
    </location>
</feature>
<feature type="short sequence motif" description="Important for signaling" evidence="1">
    <location>
        <begin position="133"/>
        <end position="135"/>
    </location>
</feature>
<feature type="compositionally biased region" description="Low complexity" evidence="5">
    <location>
        <begin position="337"/>
        <end position="352"/>
    </location>
</feature>
<feature type="site" description="Chemokine" evidence="1">
    <location>
        <position position="171"/>
    </location>
</feature>
<feature type="site" description="Chemokine" evidence="1">
    <location>
        <position position="288"/>
    </location>
</feature>
<feature type="modified residue" description="Sulfotyrosine" evidence="2">
    <location>
        <position position="7"/>
    </location>
</feature>
<feature type="modified residue" description="Sulfotyrosine" evidence="2">
    <location>
        <position position="12"/>
    </location>
</feature>
<feature type="modified residue" description="Sulfotyrosine" evidence="2">
    <location>
        <position position="21"/>
    </location>
</feature>
<feature type="modified residue" description="Phosphoserine" evidence="2">
    <location>
        <position position="319"/>
    </location>
</feature>
<feature type="modified residue" description="Phosphoserine" evidence="2">
    <location>
        <position position="321"/>
    </location>
</feature>
<feature type="modified residue" description="Phosphoserine; by PKC and GRK6" evidence="2">
    <location>
        <position position="324"/>
    </location>
</feature>
<feature type="modified residue" description="Phosphoserine; by PKC and GRK6" evidence="2">
    <location>
        <position position="325"/>
    </location>
</feature>
<feature type="modified residue" description="Phosphoserine; by GRK6" evidence="2">
    <location>
        <position position="330"/>
    </location>
</feature>
<feature type="modified residue" description="Phosphoserine; by GRK6" evidence="2">
    <location>
        <position position="339"/>
    </location>
</feature>
<feature type="modified residue" description="Phosphoserine" evidence="2">
    <location>
        <position position="348"/>
    </location>
</feature>
<feature type="modified residue" description="Phosphoserine" evidence="2">
    <location>
        <position position="351"/>
    </location>
</feature>
<feature type="glycosylation site" description="N-linked (GlcNAc...) asparagine" evidence="1">
    <location>
        <position position="11"/>
    </location>
</feature>
<feature type="glycosylation site" description="O-linked (Xyl...) (chondroitin sulfate) serine" evidence="2">
    <location>
        <position position="18"/>
    </location>
</feature>
<feature type="disulfide bond" evidence="4">
    <location>
        <begin position="28"/>
        <end position="274"/>
    </location>
</feature>
<feature type="disulfide bond" evidence="4">
    <location>
        <begin position="109"/>
        <end position="186"/>
    </location>
</feature>
<feature type="cross-link" description="Glycyl lysine isopeptide (Lys-Gly) (interchain with G-Cter in ubiquitin)" evidence="2">
    <location>
        <position position="331"/>
    </location>
</feature>
<accession>Q8HZU1</accession>
<organism>
    <name type="scientific">Callithrix jacchus</name>
    <name type="common">White-tufted-ear marmoset</name>
    <dbReference type="NCBI Taxonomy" id="9483"/>
    <lineage>
        <taxon>Eukaryota</taxon>
        <taxon>Metazoa</taxon>
        <taxon>Chordata</taxon>
        <taxon>Craniata</taxon>
        <taxon>Vertebrata</taxon>
        <taxon>Euteleostomi</taxon>
        <taxon>Mammalia</taxon>
        <taxon>Eutheria</taxon>
        <taxon>Euarchontoglires</taxon>
        <taxon>Primates</taxon>
        <taxon>Haplorrhini</taxon>
        <taxon>Platyrrhini</taxon>
        <taxon>Cebidae</taxon>
        <taxon>Callitrichinae</taxon>
        <taxon>Callithrix</taxon>
        <taxon>Callithrix</taxon>
    </lineage>
</organism>
<proteinExistence type="evidence at transcript level"/>
<protein>
    <recommendedName>
        <fullName>C-X-C chemokine receptor type 4</fullName>
        <shortName>CXC-R4</shortName>
        <shortName>CXCR-4</shortName>
    </recommendedName>
    <cdAntigenName>CD184</cdAntigenName>
</protein>
<sequence>MEGISIYTSDNYTEEIGSGDYDSIKEPCFREENAHFNRIFLPTIYSIIFLTGIVGNGLVILVMGYQKKLRSMTDKYRLHLSVADLLFVITLPFWAVDAVANWYFGKFLCKAVHVIYTVNLYSSVLILAFISLDRYLAIVHATNSQRPRKLLAEKVVYVGVWIPALLLTIPDFIFANVSEADDRYICDRFYPNDLWVVVFQFQHIMVGLILPGIVILSCYCIIISKLSHSKGHQKRKALKTTVILILAFFACWLPYYIGISIDSFILLEIIRQGCEFENTVHKWISITEALAFFHCCLNPILYAFLGAKFKTSAQHALTSVSRGSSLKILSKGKRGGHSSVSTESESSSFHSS</sequence>
<keyword id="KW-0965">Cell junction</keyword>
<keyword id="KW-1003">Cell membrane</keyword>
<keyword id="KW-1015">Disulfide bond</keyword>
<keyword id="KW-0967">Endosome</keyword>
<keyword id="KW-0297">G-protein coupled receptor</keyword>
<keyword id="KW-0325">Glycoprotein</keyword>
<keyword id="KW-1017">Isopeptide bond</keyword>
<keyword id="KW-0458">Lysosome</keyword>
<keyword id="KW-0472">Membrane</keyword>
<keyword id="KW-0597">Phosphoprotein</keyword>
<keyword id="KW-0654">Proteoglycan</keyword>
<keyword id="KW-0675">Receptor</keyword>
<keyword id="KW-1185">Reference proteome</keyword>
<keyword id="KW-0765">Sulfation</keyword>
<keyword id="KW-0807">Transducer</keyword>
<keyword id="KW-0812">Transmembrane</keyword>
<keyword id="KW-1133">Transmembrane helix</keyword>
<keyword id="KW-0832">Ubl conjugation</keyword>
<dbReference type="EMBL" id="AF452612">
    <property type="protein sequence ID" value="AAN14528.1"/>
    <property type="molecule type" value="mRNA"/>
</dbReference>
<dbReference type="RefSeq" id="XP_002749520.1">
    <property type="nucleotide sequence ID" value="XM_002749474.6"/>
</dbReference>
<dbReference type="SMR" id="Q8HZU1"/>
<dbReference type="FunCoup" id="Q8HZU1">
    <property type="interactions" value="1476"/>
</dbReference>
<dbReference type="STRING" id="9483.ENSCJAP00000022127"/>
<dbReference type="GlyCosmos" id="Q8HZU1">
    <property type="glycosylation" value="2 sites, No reported glycans"/>
</dbReference>
<dbReference type="Ensembl" id="ENSCJAT00000023392.4">
    <property type="protein sequence ID" value="ENSCJAP00000022127.3"/>
    <property type="gene ID" value="ENSCJAG00000012046.4"/>
</dbReference>
<dbReference type="GeneID" id="100406954"/>
<dbReference type="KEGG" id="cjc:100406954"/>
<dbReference type="CTD" id="7852"/>
<dbReference type="eggNOG" id="KOG3656">
    <property type="taxonomic scope" value="Eukaryota"/>
</dbReference>
<dbReference type="GeneTree" id="ENSGT01050000244848"/>
<dbReference type="HOGENOM" id="CLU_009579_8_3_1"/>
<dbReference type="InParanoid" id="Q8HZU1"/>
<dbReference type="OMA" id="YVCQRFY"/>
<dbReference type="OrthoDB" id="8413490at2759"/>
<dbReference type="TreeFam" id="TF330966"/>
<dbReference type="Proteomes" id="UP000008225">
    <property type="component" value="Chromosome 6"/>
</dbReference>
<dbReference type="Bgee" id="ENSCJAG00000012046">
    <property type="expression patterns" value="Expressed in kidney and 6 other cell types or tissues"/>
</dbReference>
<dbReference type="GO" id="GO:0070161">
    <property type="term" value="C:anchoring junction"/>
    <property type="evidence" value="ECO:0007669"/>
    <property type="project" value="UniProtKB-SubCell"/>
</dbReference>
<dbReference type="GO" id="GO:0031252">
    <property type="term" value="C:cell leading edge"/>
    <property type="evidence" value="ECO:0007669"/>
    <property type="project" value="Ensembl"/>
</dbReference>
<dbReference type="GO" id="GO:0005769">
    <property type="term" value="C:early endosome"/>
    <property type="evidence" value="ECO:0000250"/>
    <property type="project" value="UniProtKB"/>
</dbReference>
<dbReference type="GO" id="GO:0009897">
    <property type="term" value="C:external side of plasma membrane"/>
    <property type="evidence" value="ECO:0007669"/>
    <property type="project" value="TreeGrafter"/>
</dbReference>
<dbReference type="GO" id="GO:0005770">
    <property type="term" value="C:late endosome"/>
    <property type="evidence" value="ECO:0000250"/>
    <property type="project" value="UniProtKB"/>
</dbReference>
<dbReference type="GO" id="GO:0005764">
    <property type="term" value="C:lysosome"/>
    <property type="evidence" value="ECO:0000250"/>
    <property type="project" value="UniProtKB"/>
</dbReference>
<dbReference type="GO" id="GO:0005886">
    <property type="term" value="C:plasma membrane"/>
    <property type="evidence" value="ECO:0000250"/>
    <property type="project" value="UniProtKB"/>
</dbReference>
<dbReference type="GO" id="GO:0032991">
    <property type="term" value="C:protein-containing complex"/>
    <property type="evidence" value="ECO:0007669"/>
    <property type="project" value="Ensembl"/>
</dbReference>
<dbReference type="GO" id="GO:0003779">
    <property type="term" value="F:actin binding"/>
    <property type="evidence" value="ECO:0007669"/>
    <property type="project" value="Ensembl"/>
</dbReference>
<dbReference type="GO" id="GO:0019957">
    <property type="term" value="F:C-C chemokine binding"/>
    <property type="evidence" value="ECO:0007669"/>
    <property type="project" value="Ensembl"/>
</dbReference>
<dbReference type="GO" id="GO:0016493">
    <property type="term" value="F:C-C chemokine receptor activity"/>
    <property type="evidence" value="ECO:0007669"/>
    <property type="project" value="TreeGrafter"/>
</dbReference>
<dbReference type="GO" id="GO:0038147">
    <property type="term" value="F:C-X-C motif chemokine 12 receptor activity"/>
    <property type="evidence" value="ECO:0000250"/>
    <property type="project" value="UniProtKB"/>
</dbReference>
<dbReference type="GO" id="GO:0032027">
    <property type="term" value="F:myosin light chain binding"/>
    <property type="evidence" value="ECO:0007669"/>
    <property type="project" value="Ensembl"/>
</dbReference>
<dbReference type="GO" id="GO:0043130">
    <property type="term" value="F:ubiquitin binding"/>
    <property type="evidence" value="ECO:0007669"/>
    <property type="project" value="Ensembl"/>
</dbReference>
<dbReference type="GO" id="GO:0031625">
    <property type="term" value="F:ubiquitin protein ligase binding"/>
    <property type="evidence" value="ECO:0007669"/>
    <property type="project" value="Ensembl"/>
</dbReference>
<dbReference type="GO" id="GO:0007420">
    <property type="term" value="P:brain development"/>
    <property type="evidence" value="ECO:0007669"/>
    <property type="project" value="TreeGrafter"/>
</dbReference>
<dbReference type="GO" id="GO:0019722">
    <property type="term" value="P:calcium-mediated signaling"/>
    <property type="evidence" value="ECO:0007669"/>
    <property type="project" value="Ensembl"/>
</dbReference>
<dbReference type="GO" id="GO:0060326">
    <property type="term" value="P:cell chemotaxis"/>
    <property type="evidence" value="ECO:0007669"/>
    <property type="project" value="TreeGrafter"/>
</dbReference>
<dbReference type="GO" id="GO:0071345">
    <property type="term" value="P:cellular response to cytokine stimulus"/>
    <property type="evidence" value="ECO:0000250"/>
    <property type="project" value="UniProtKB"/>
</dbReference>
<dbReference type="GO" id="GO:0038160">
    <property type="term" value="P:CXCL12-activated CXCR4 signaling pathway"/>
    <property type="evidence" value="ECO:0000250"/>
    <property type="project" value="UniProtKB"/>
</dbReference>
<dbReference type="GO" id="GO:0006955">
    <property type="term" value="P:immune response"/>
    <property type="evidence" value="ECO:0007669"/>
    <property type="project" value="TreeGrafter"/>
</dbReference>
<dbReference type="GO" id="GO:0022008">
    <property type="term" value="P:neurogenesis"/>
    <property type="evidence" value="ECO:0007669"/>
    <property type="project" value="TreeGrafter"/>
</dbReference>
<dbReference type="GO" id="GO:0030335">
    <property type="term" value="P:positive regulation of cell migration"/>
    <property type="evidence" value="ECO:0007669"/>
    <property type="project" value="Ensembl"/>
</dbReference>
<dbReference type="GO" id="GO:0007204">
    <property type="term" value="P:positive regulation of cytosolic calcium ion concentration"/>
    <property type="evidence" value="ECO:0007669"/>
    <property type="project" value="TreeGrafter"/>
</dbReference>
<dbReference type="GO" id="GO:2000448">
    <property type="term" value="P:positive regulation of macrophage migration inhibitory factor signaling pathway"/>
    <property type="evidence" value="ECO:0007669"/>
    <property type="project" value="Ensembl"/>
</dbReference>
<dbReference type="GO" id="GO:1904018">
    <property type="term" value="P:positive regulation of vasculature development"/>
    <property type="evidence" value="ECO:0007669"/>
    <property type="project" value="Ensembl"/>
</dbReference>
<dbReference type="GO" id="GO:0030155">
    <property type="term" value="P:regulation of cell adhesion"/>
    <property type="evidence" value="ECO:0007669"/>
    <property type="project" value="Ensembl"/>
</dbReference>
<dbReference type="GO" id="GO:0050920">
    <property type="term" value="P:regulation of chemotaxis"/>
    <property type="evidence" value="ECO:0007669"/>
    <property type="project" value="Ensembl"/>
</dbReference>
<dbReference type="GO" id="GO:0001666">
    <property type="term" value="P:response to hypoxia"/>
    <property type="evidence" value="ECO:0007669"/>
    <property type="project" value="Ensembl"/>
</dbReference>
<dbReference type="CDD" id="cd15179">
    <property type="entry name" value="7tmA_CXCR4"/>
    <property type="match status" value="1"/>
</dbReference>
<dbReference type="FunFam" id="1.20.1070.10:FF:000063">
    <property type="entry name" value="C-X-C chemokine receptor type 4"/>
    <property type="match status" value="1"/>
</dbReference>
<dbReference type="Gene3D" id="1.20.1070.10">
    <property type="entry name" value="Rhodopsin 7-helix transmembrane proteins"/>
    <property type="match status" value="1"/>
</dbReference>
<dbReference type="InterPro" id="IPR050119">
    <property type="entry name" value="CCR1-9-like"/>
</dbReference>
<dbReference type="InterPro" id="IPR022726">
    <property type="entry name" value="Chemokine_CXCR4_N_dom"/>
</dbReference>
<dbReference type="InterPro" id="IPR000355">
    <property type="entry name" value="Chemokine_rcpt"/>
</dbReference>
<dbReference type="InterPro" id="IPR001277">
    <property type="entry name" value="CXCR4/ACKR2"/>
</dbReference>
<dbReference type="InterPro" id="IPR000276">
    <property type="entry name" value="GPCR_Rhodpsn"/>
</dbReference>
<dbReference type="InterPro" id="IPR017452">
    <property type="entry name" value="GPCR_Rhodpsn_7TM"/>
</dbReference>
<dbReference type="PANTHER" id="PTHR10489:SF594">
    <property type="entry name" value="C-X-C CHEMOKINE RECEPTOR TYPE 4"/>
    <property type="match status" value="1"/>
</dbReference>
<dbReference type="PANTHER" id="PTHR10489">
    <property type="entry name" value="CELL ADHESION MOLECULE"/>
    <property type="match status" value="1"/>
</dbReference>
<dbReference type="Pfam" id="PF00001">
    <property type="entry name" value="7tm_1"/>
    <property type="match status" value="1"/>
</dbReference>
<dbReference type="Pfam" id="PF12109">
    <property type="entry name" value="CXCR4_N"/>
    <property type="match status" value="1"/>
</dbReference>
<dbReference type="PRINTS" id="PR00657">
    <property type="entry name" value="CCCHEMOKINER"/>
</dbReference>
<dbReference type="PRINTS" id="PR00645">
    <property type="entry name" value="CXCCHMKINER4"/>
</dbReference>
<dbReference type="PRINTS" id="PR00237">
    <property type="entry name" value="GPCRRHODOPSN"/>
</dbReference>
<dbReference type="SUPFAM" id="SSF81321">
    <property type="entry name" value="Family A G protein-coupled receptor-like"/>
    <property type="match status" value="1"/>
</dbReference>
<dbReference type="PROSITE" id="PS00237">
    <property type="entry name" value="G_PROTEIN_RECEP_F1_1"/>
    <property type="match status" value="1"/>
</dbReference>
<dbReference type="PROSITE" id="PS50262">
    <property type="entry name" value="G_PROTEIN_RECEP_F1_2"/>
    <property type="match status" value="1"/>
</dbReference>
<evidence type="ECO:0000250" key="1"/>
<evidence type="ECO:0000250" key="2">
    <source>
        <dbReference type="UniProtKB" id="P61073"/>
    </source>
</evidence>
<evidence type="ECO:0000250" key="3">
    <source>
        <dbReference type="UniProtKB" id="P70658"/>
    </source>
</evidence>
<evidence type="ECO:0000255" key="4">
    <source>
        <dbReference type="PROSITE-ProRule" id="PRU00521"/>
    </source>
</evidence>
<evidence type="ECO:0000256" key="5">
    <source>
        <dbReference type="SAM" id="MobiDB-lite"/>
    </source>
</evidence>
<evidence type="ECO:0000305" key="6"/>
<comment type="function">
    <text evidence="2 3">Receptor for the C-X-C chemokine CXCL12/SDF-1 that transduces a signal by increasing intracellular calcium ion levels and enhancing MAPK1/MAPK3 activation. Involved in the AKT signaling cascade (By similarity). Plays a role in regulation of cell migration, e.g. during wound healing. Acts as a receptor for extracellular ubiquitin; leading to enhanced intracellular calcium ions and reduced cellular cAMP levels. Binds bacterial lipopolysaccharide (LPS) et mediates LPS-induced inflammatory response, including TNF secretion by monocytes (By similarity). Involved in hematopoiesis and in cardiac ventricular septum formation. Also plays an essential role in vascularization of the gastrointestinal tract, probably by regulating vascular branching and/or remodeling processes in endothelial cells. Involved in cerebellar development. In the CNS, could mediate hippocampal-neuron survival (By similarity).</text>
</comment>
<comment type="subunit">
    <text evidence="2">Monomer. Can form homodimers. Interacts with CD164. Interacts with ARRB2; the interaction is dependent on the C-terminal phosphorylation of CXCR4 and allows activation of MAPK1 and MAPK3. Interacts with ARR3; the interaction is dependent on the C-terminal phosphorylation of CXCR4 and modulates calcium mobilization. Interacts with RNF113A; the interaction, enhanced by CXCL12, promotes CXCR4 ubiquitination and subsequent degradation. Interacts (via the cytoplasmic C-terminal) with ITCH (via the WW domains I and II); the interaction, enhanced by CXCL12, promotes CXCR4 ubiquitination and leads to its degradation. Interacts with extracellular ubiquitin. Interacts with DBN1; this interaction is enhanced by antigenic stimulation. Following LPS binding, may form a complex with GDF5, HSP90AA1 and HSPA8.</text>
</comment>
<comment type="subcellular location">
    <subcellularLocation>
        <location evidence="2">Cell membrane</location>
        <topology evidence="2">Multi-pass membrane protein</topology>
    </subcellularLocation>
    <subcellularLocation>
        <location evidence="1">Cell junction</location>
    </subcellularLocation>
    <subcellularLocation>
        <location evidence="1">Early endosome</location>
    </subcellularLocation>
    <subcellularLocation>
        <location evidence="1">Late endosome</location>
    </subcellularLocation>
    <subcellularLocation>
        <location evidence="1">Lysosome</location>
    </subcellularLocation>
    <text evidence="1">In unstimulated cells, diffuse pattern on plasma membrane. On agonist stimulation, colocalizes with ITCH at the plasma membrane where it becomes ubiquitinated (By similarity). In the presence of antigen, distributes to the immunological synapse forming at the T-cell-APC contact area, where it localizes at the peripheral and distal supramolecular activation cluster (SMAC) (By similarity).</text>
</comment>
<comment type="PTM">
    <text evidence="2">Phosphorylated on agonist stimulation. Rapidly phosphorylated on serine and threonine residues in the C-terminal. Phosphorylation at Ser-324 and Ser-325 leads to recruitment of ITCH, ubiquitination and protein degradation.</text>
</comment>
<comment type="PTM">
    <text evidence="2">Ubiquitinated after ligand binding, leading to its degradation. Ubiquitinated by ITCH at the cell membrane on agonist stimulation. The ubiquitin-dependent mechanism, endosomal sorting complex required for transport (ESCRT), then targets CXCR4 for lysosomal degradation. This process is dependent also on prior Ser-/Thr-phosphorylation in the C-terminal of CXCR4. Also binding of ARRB1 to STAM negatively regulates CXCR4 sorting to lysosomes though modulating ubiquitination of SFR5S.</text>
</comment>
<comment type="PTM">
    <text evidence="2">Sulfation is required for efficient binding of CXCL12/SDF-1alpha and promotes its dimerization.</text>
</comment>
<comment type="PTM">
    <text evidence="2">O- and N-glycosylated. N-glycosylation can mask coreceptor function. The O-glycosylation chondroitin sulfate attachment does not affect interaction with CXCL12/SDF-1alpha nor its coreceptor activity.</text>
</comment>
<comment type="similarity">
    <text evidence="4">Belongs to the G-protein coupled receptor 1 family.</text>
</comment>
<reference key="1">
    <citation type="journal article" date="2002" name="J. Exp. Med.">
        <title>Blockade of HIV-1 infection of New World monkey cells occurs primarily at the stage of virus entry.</title>
        <authorList>
            <person name="LaBonte J.A."/>
            <person name="Babcock G.J."/>
            <person name="Patel T."/>
            <person name="Sodroski J."/>
        </authorList>
    </citation>
    <scope>NUCLEOTIDE SEQUENCE [MRNA]</scope>
</reference>